<protein>
    <recommendedName>
        <fullName evidence="1">Phosphatidylglycerol--prolipoprotein diacylglyceryl transferase</fullName>
        <ecNumber evidence="1">2.5.1.145</ecNumber>
    </recommendedName>
</protein>
<organism>
    <name type="scientific">Corynebacterium glutamicum (strain ATCC 13032 / DSM 20300 / JCM 1318 / BCRC 11384 / CCUG 27702 / LMG 3730 / NBRC 12168 / NCIMB 10025 / NRRL B-2784 / 534)</name>
    <dbReference type="NCBI Taxonomy" id="196627"/>
    <lineage>
        <taxon>Bacteria</taxon>
        <taxon>Bacillati</taxon>
        <taxon>Actinomycetota</taxon>
        <taxon>Actinomycetes</taxon>
        <taxon>Mycobacteriales</taxon>
        <taxon>Corynebacteriaceae</taxon>
        <taxon>Corynebacterium</taxon>
    </lineage>
</organism>
<accession>Q8NNU2</accession>
<sequence length="316" mass="34161">MTLATIPSPPQGVWYLGPIPIRAYAMCIIAGIIVAIWLTRKRYAARGGNPEIVLDAAIVAVPAGIIGGRIYHVITDNQKYFCDTCNPVDAFKITNGGLGIWGAVILGGLAVAVFFRYKKLPLAPFADAVAPAVILAQGIGRLGNWFNQELYGAETTVPWALEIYYRVDENGKFAPVTGTSTGEVMATVHPTFLYELLWNLLIFALLMWADKRFKLGHGRVFALYVAGYTLGRFWIEQMRVDEATLIGGIRINTIVSAVVFAGAIIVFFLLKKGRETPEEVDPTFAASVAADAVASPDGKPLPKAGEGIDGETPSTR</sequence>
<keyword id="KW-1003">Cell membrane</keyword>
<keyword id="KW-0472">Membrane</keyword>
<keyword id="KW-1185">Reference proteome</keyword>
<keyword id="KW-0808">Transferase</keyword>
<keyword id="KW-0812">Transmembrane</keyword>
<keyword id="KW-1133">Transmembrane helix</keyword>
<name>LGT_CORGL</name>
<reference key="1">
    <citation type="journal article" date="2003" name="Appl. Microbiol. Biotechnol.">
        <title>The Corynebacterium glutamicum genome: features and impacts on biotechnological processes.</title>
        <authorList>
            <person name="Ikeda M."/>
            <person name="Nakagawa S."/>
        </authorList>
    </citation>
    <scope>NUCLEOTIDE SEQUENCE [LARGE SCALE GENOMIC DNA]</scope>
    <source>
        <strain>ATCC 13032 / DSM 20300 / JCM 1318 / BCRC 11384 / CCUG 27702 / LMG 3730 / NBRC 12168 / NCIMB 10025 / NRRL B-2784 / 534</strain>
    </source>
</reference>
<reference key="2">
    <citation type="journal article" date="2003" name="J. Biotechnol.">
        <title>The complete Corynebacterium glutamicum ATCC 13032 genome sequence and its impact on the production of L-aspartate-derived amino acids and vitamins.</title>
        <authorList>
            <person name="Kalinowski J."/>
            <person name="Bathe B."/>
            <person name="Bartels D."/>
            <person name="Bischoff N."/>
            <person name="Bott M."/>
            <person name="Burkovski A."/>
            <person name="Dusch N."/>
            <person name="Eggeling L."/>
            <person name="Eikmanns B.J."/>
            <person name="Gaigalat L."/>
            <person name="Goesmann A."/>
            <person name="Hartmann M."/>
            <person name="Huthmacher K."/>
            <person name="Kraemer R."/>
            <person name="Linke B."/>
            <person name="McHardy A.C."/>
            <person name="Meyer F."/>
            <person name="Moeckel B."/>
            <person name="Pfefferle W."/>
            <person name="Puehler A."/>
            <person name="Rey D.A."/>
            <person name="Rueckert C."/>
            <person name="Rupp O."/>
            <person name="Sahm H."/>
            <person name="Wendisch V.F."/>
            <person name="Wiegraebe I."/>
            <person name="Tauch A."/>
        </authorList>
    </citation>
    <scope>NUCLEOTIDE SEQUENCE [LARGE SCALE GENOMIC DNA]</scope>
    <source>
        <strain>ATCC 13032 / DSM 20300 / JCM 1318 / BCRC 11384 / CCUG 27702 / LMG 3730 / NBRC 12168 / NCIMB 10025 / NRRL B-2784 / 534</strain>
    </source>
</reference>
<gene>
    <name evidence="1" type="primary">lgt</name>
    <name type="ordered locus">Cgl2090</name>
    <name type="ordered locus">cg2292</name>
</gene>
<proteinExistence type="inferred from homology"/>
<comment type="function">
    <text evidence="1">Catalyzes the transfer of the diacylglyceryl group from phosphatidylglycerol to the sulfhydryl group of the N-terminal cysteine of a prolipoprotein, the first step in the formation of mature lipoproteins.</text>
</comment>
<comment type="catalytic activity">
    <reaction evidence="1">
        <text>L-cysteinyl-[prolipoprotein] + a 1,2-diacyl-sn-glycero-3-phospho-(1'-sn-glycerol) = an S-1,2-diacyl-sn-glyceryl-L-cysteinyl-[prolipoprotein] + sn-glycerol 1-phosphate + H(+)</text>
        <dbReference type="Rhea" id="RHEA:56712"/>
        <dbReference type="Rhea" id="RHEA-COMP:14679"/>
        <dbReference type="Rhea" id="RHEA-COMP:14680"/>
        <dbReference type="ChEBI" id="CHEBI:15378"/>
        <dbReference type="ChEBI" id="CHEBI:29950"/>
        <dbReference type="ChEBI" id="CHEBI:57685"/>
        <dbReference type="ChEBI" id="CHEBI:64716"/>
        <dbReference type="ChEBI" id="CHEBI:140658"/>
        <dbReference type="EC" id="2.5.1.145"/>
    </reaction>
</comment>
<comment type="pathway">
    <text evidence="1">Protein modification; lipoprotein biosynthesis (diacylglyceryl transfer).</text>
</comment>
<comment type="subcellular location">
    <subcellularLocation>
        <location evidence="1">Cell membrane</location>
        <topology evidence="1">Multi-pass membrane protein</topology>
    </subcellularLocation>
</comment>
<comment type="similarity">
    <text evidence="1">Belongs to the Lgt family.</text>
</comment>
<evidence type="ECO:0000255" key="1">
    <source>
        <dbReference type="HAMAP-Rule" id="MF_01147"/>
    </source>
</evidence>
<evidence type="ECO:0000256" key="2">
    <source>
        <dbReference type="SAM" id="MobiDB-lite"/>
    </source>
</evidence>
<dbReference type="EC" id="2.5.1.145" evidence="1"/>
<dbReference type="EMBL" id="BA000036">
    <property type="protein sequence ID" value="BAB99483.1"/>
    <property type="molecule type" value="Genomic_DNA"/>
</dbReference>
<dbReference type="EMBL" id="BX927154">
    <property type="protein sequence ID" value="CAF20426.1"/>
    <property type="molecule type" value="Genomic_DNA"/>
</dbReference>
<dbReference type="RefSeq" id="NP_601289.1">
    <property type="nucleotide sequence ID" value="NC_003450.3"/>
</dbReference>
<dbReference type="RefSeq" id="WP_011014874.1">
    <property type="nucleotide sequence ID" value="NC_006958.1"/>
</dbReference>
<dbReference type="SMR" id="Q8NNU2"/>
<dbReference type="STRING" id="196627.cg2292"/>
<dbReference type="GeneID" id="1020041"/>
<dbReference type="KEGG" id="cgb:cg2292"/>
<dbReference type="KEGG" id="cgl:Cgl2090"/>
<dbReference type="PATRIC" id="fig|196627.13.peg.2026"/>
<dbReference type="eggNOG" id="COG0682">
    <property type="taxonomic scope" value="Bacteria"/>
</dbReference>
<dbReference type="HOGENOM" id="CLU_013386_2_0_11"/>
<dbReference type="OrthoDB" id="871140at2"/>
<dbReference type="BioCyc" id="CORYNE:G18NG-11682-MONOMER"/>
<dbReference type="UniPathway" id="UPA00664"/>
<dbReference type="Proteomes" id="UP000000582">
    <property type="component" value="Chromosome"/>
</dbReference>
<dbReference type="Proteomes" id="UP000001009">
    <property type="component" value="Chromosome"/>
</dbReference>
<dbReference type="GO" id="GO:0005886">
    <property type="term" value="C:plasma membrane"/>
    <property type="evidence" value="ECO:0007669"/>
    <property type="project" value="UniProtKB-SubCell"/>
</dbReference>
<dbReference type="GO" id="GO:0008961">
    <property type="term" value="F:phosphatidylglycerol-prolipoprotein diacylglyceryl transferase activity"/>
    <property type="evidence" value="ECO:0007669"/>
    <property type="project" value="UniProtKB-UniRule"/>
</dbReference>
<dbReference type="GO" id="GO:0042158">
    <property type="term" value="P:lipoprotein biosynthetic process"/>
    <property type="evidence" value="ECO:0007669"/>
    <property type="project" value="UniProtKB-UniRule"/>
</dbReference>
<dbReference type="HAMAP" id="MF_01147">
    <property type="entry name" value="Lgt"/>
    <property type="match status" value="1"/>
</dbReference>
<dbReference type="InterPro" id="IPR001640">
    <property type="entry name" value="Lgt"/>
</dbReference>
<dbReference type="NCBIfam" id="TIGR00544">
    <property type="entry name" value="lgt"/>
    <property type="match status" value="1"/>
</dbReference>
<dbReference type="PANTHER" id="PTHR30589:SF0">
    <property type="entry name" value="PHOSPHATIDYLGLYCEROL--PROLIPOPROTEIN DIACYLGLYCERYL TRANSFERASE"/>
    <property type="match status" value="1"/>
</dbReference>
<dbReference type="PANTHER" id="PTHR30589">
    <property type="entry name" value="PROLIPOPROTEIN DIACYLGLYCERYL TRANSFERASE"/>
    <property type="match status" value="1"/>
</dbReference>
<dbReference type="Pfam" id="PF01790">
    <property type="entry name" value="LGT"/>
    <property type="match status" value="1"/>
</dbReference>
<dbReference type="PROSITE" id="PS01311">
    <property type="entry name" value="LGT"/>
    <property type="match status" value="1"/>
</dbReference>
<feature type="chain" id="PRO_0000172591" description="Phosphatidylglycerol--prolipoprotein diacylglyceryl transferase">
    <location>
        <begin position="1"/>
        <end position="316"/>
    </location>
</feature>
<feature type="transmembrane region" description="Helical" evidence="1">
    <location>
        <begin position="18"/>
        <end position="38"/>
    </location>
</feature>
<feature type="transmembrane region" description="Helical" evidence="1">
    <location>
        <begin position="47"/>
        <end position="67"/>
    </location>
</feature>
<feature type="transmembrane region" description="Helical" evidence="1">
    <location>
        <begin position="95"/>
        <end position="115"/>
    </location>
</feature>
<feature type="transmembrane region" description="Helical" evidence="1">
    <location>
        <begin position="188"/>
        <end position="208"/>
    </location>
</feature>
<feature type="transmembrane region" description="Helical" evidence="1">
    <location>
        <begin position="251"/>
        <end position="271"/>
    </location>
</feature>
<feature type="region of interest" description="Disordered" evidence="2">
    <location>
        <begin position="292"/>
        <end position="316"/>
    </location>
</feature>
<feature type="binding site" evidence="1">
    <location>
        <position position="141"/>
    </location>
    <ligand>
        <name>a 1,2-diacyl-sn-glycero-3-phospho-(1'-sn-glycerol)</name>
        <dbReference type="ChEBI" id="CHEBI:64716"/>
    </ligand>
</feature>